<comment type="cofactor">
    <cofactor evidence="1">
        <name>[4Fe-4S] cluster</name>
        <dbReference type="ChEBI" id="CHEBI:49883"/>
    </cofactor>
    <text evidence="1">Binds 1 [4Fe-4S] cluster. The cluster is coordinated with 3 cysteines and an exchangeable S-adenosyl-L-methionine.</text>
</comment>
<comment type="subcellular location">
    <subcellularLocation>
        <location evidence="4">Cytoplasm</location>
    </subcellularLocation>
</comment>
<comment type="similarity">
    <text evidence="4">Belongs to the radical SAM superfamily. RlmN family.</text>
</comment>
<evidence type="ECO:0000250" key="1"/>
<evidence type="ECO:0000255" key="2"/>
<evidence type="ECO:0000255" key="3">
    <source>
        <dbReference type="PROSITE-ProRule" id="PRU01266"/>
    </source>
</evidence>
<evidence type="ECO:0000305" key="4"/>
<accession>A4XU99</accession>
<sequence>MQLADLTQRLAALGAKPQHIGRITRAWLQGKPLDTGTKHQKTENFLPLSVRQELPAIAAELDALVRLRSEHPGADGSARLLVELADKQMVESVLLPRDGLCISSQVGCAVGCVFCMTGKSGLLRQLSSAEMVAQVALGRRFRPVKKVVFMGMGEPAHNLDNVLEAIDLLGTEGGIGHKNLVFSTVGDPRVFERLPQQRVRPALALSLHTTDAELRQRLLPKAPRIDPEQLMELGEAYARSIDYPIQYQWTLLKGINDSQQEMDNILRLFKGKFAVLNLIPYNSLDADNYQRPDGERIVQMVRYLHSRGVLTKVRNSAGQDIDGGCGQLRARAVDLVNTSRLRLSRH</sequence>
<organism>
    <name type="scientific">Ectopseudomonas mendocina (strain ymp)</name>
    <name type="common">Pseudomonas mendocina</name>
    <dbReference type="NCBI Taxonomy" id="399739"/>
    <lineage>
        <taxon>Bacteria</taxon>
        <taxon>Pseudomonadati</taxon>
        <taxon>Pseudomonadota</taxon>
        <taxon>Gammaproteobacteria</taxon>
        <taxon>Pseudomonadales</taxon>
        <taxon>Pseudomonadaceae</taxon>
        <taxon>Ectopseudomonas</taxon>
    </lineage>
</organism>
<gene>
    <name type="ordered locus">Pmen_2155</name>
</gene>
<dbReference type="EC" id="2.1.1.-"/>
<dbReference type="EMBL" id="CP000680">
    <property type="protein sequence ID" value="ABP84915.1"/>
    <property type="molecule type" value="Genomic_DNA"/>
</dbReference>
<dbReference type="SMR" id="A4XU99"/>
<dbReference type="STRING" id="399739.Pmen_2155"/>
<dbReference type="KEGG" id="pmy:Pmen_2155"/>
<dbReference type="PATRIC" id="fig|399739.8.peg.2180"/>
<dbReference type="eggNOG" id="COG0820">
    <property type="taxonomic scope" value="Bacteria"/>
</dbReference>
<dbReference type="HOGENOM" id="CLU_029101_3_3_6"/>
<dbReference type="OrthoDB" id="9793973at2"/>
<dbReference type="GO" id="GO:0005737">
    <property type="term" value="C:cytoplasm"/>
    <property type="evidence" value="ECO:0007669"/>
    <property type="project" value="UniProtKB-SubCell"/>
</dbReference>
<dbReference type="GO" id="GO:0051539">
    <property type="term" value="F:4 iron, 4 sulfur cluster binding"/>
    <property type="evidence" value="ECO:0007669"/>
    <property type="project" value="UniProtKB-KW"/>
</dbReference>
<dbReference type="GO" id="GO:0046872">
    <property type="term" value="F:metal ion binding"/>
    <property type="evidence" value="ECO:0007669"/>
    <property type="project" value="UniProtKB-KW"/>
</dbReference>
<dbReference type="GO" id="GO:0008173">
    <property type="term" value="F:RNA methyltransferase activity"/>
    <property type="evidence" value="ECO:0007669"/>
    <property type="project" value="InterPro"/>
</dbReference>
<dbReference type="GO" id="GO:0070475">
    <property type="term" value="P:rRNA base methylation"/>
    <property type="evidence" value="ECO:0007669"/>
    <property type="project" value="TreeGrafter"/>
</dbReference>
<dbReference type="GO" id="GO:0030488">
    <property type="term" value="P:tRNA methylation"/>
    <property type="evidence" value="ECO:0007669"/>
    <property type="project" value="TreeGrafter"/>
</dbReference>
<dbReference type="Gene3D" id="3.20.20.70">
    <property type="entry name" value="Aldolase class I"/>
    <property type="match status" value="1"/>
</dbReference>
<dbReference type="InterPro" id="IPR013785">
    <property type="entry name" value="Aldolase_TIM"/>
</dbReference>
<dbReference type="InterPro" id="IPR040072">
    <property type="entry name" value="Methyltransferase_A"/>
</dbReference>
<dbReference type="InterPro" id="IPR004383">
    <property type="entry name" value="rRNA_lsu_MTrfase_RlmN/Cfr"/>
</dbReference>
<dbReference type="InterPro" id="IPR007197">
    <property type="entry name" value="rSAM"/>
</dbReference>
<dbReference type="NCBIfam" id="NF011034">
    <property type="entry name" value="PRK14464.1"/>
    <property type="match status" value="1"/>
</dbReference>
<dbReference type="PANTHER" id="PTHR30544">
    <property type="entry name" value="23S RRNA METHYLTRANSFERASE"/>
    <property type="match status" value="1"/>
</dbReference>
<dbReference type="PANTHER" id="PTHR30544:SF5">
    <property type="entry name" value="RADICAL SAM CORE DOMAIN-CONTAINING PROTEIN"/>
    <property type="match status" value="1"/>
</dbReference>
<dbReference type="Pfam" id="PF04055">
    <property type="entry name" value="Radical_SAM"/>
    <property type="match status" value="1"/>
</dbReference>
<dbReference type="PIRSF" id="PIRSF006004">
    <property type="entry name" value="CHP00048"/>
    <property type="match status" value="1"/>
</dbReference>
<dbReference type="SFLD" id="SFLDF00275">
    <property type="entry name" value="adenosine_C2_methyltransferase"/>
    <property type="match status" value="1"/>
</dbReference>
<dbReference type="SFLD" id="SFLDS00029">
    <property type="entry name" value="Radical_SAM"/>
    <property type="match status" value="1"/>
</dbReference>
<dbReference type="SUPFAM" id="SSF102114">
    <property type="entry name" value="Radical SAM enzymes"/>
    <property type="match status" value="1"/>
</dbReference>
<dbReference type="PROSITE" id="PS51918">
    <property type="entry name" value="RADICAL_SAM"/>
    <property type="match status" value="1"/>
</dbReference>
<keyword id="KW-0004">4Fe-4S</keyword>
<keyword id="KW-0963">Cytoplasm</keyword>
<keyword id="KW-1015">Disulfide bond</keyword>
<keyword id="KW-0408">Iron</keyword>
<keyword id="KW-0411">Iron-sulfur</keyword>
<keyword id="KW-0479">Metal-binding</keyword>
<keyword id="KW-0489">Methyltransferase</keyword>
<keyword id="KW-0949">S-adenosyl-L-methionine</keyword>
<keyword id="KW-0808">Transferase</keyword>
<reference key="1">
    <citation type="submission" date="2007-04" db="EMBL/GenBank/DDBJ databases">
        <title>Complete sequence of Pseudomonas mendocina ymp.</title>
        <authorList>
            <consortium name="US DOE Joint Genome Institute"/>
            <person name="Copeland A."/>
            <person name="Lucas S."/>
            <person name="Lapidus A."/>
            <person name="Barry K."/>
            <person name="Glavina del Rio T."/>
            <person name="Dalin E."/>
            <person name="Tice H."/>
            <person name="Pitluck S."/>
            <person name="Kiss H."/>
            <person name="Brettin T."/>
            <person name="Detter J.C."/>
            <person name="Bruce D."/>
            <person name="Han C."/>
            <person name="Schmutz J."/>
            <person name="Larimer F."/>
            <person name="Land M."/>
            <person name="Hauser L."/>
            <person name="Kyrpides N."/>
            <person name="Mikhailova N."/>
            <person name="Hersman L."/>
            <person name="Dubois J."/>
            <person name="Maurice P."/>
            <person name="Richardson P."/>
        </authorList>
    </citation>
    <scope>NUCLEOTIDE SEQUENCE [LARGE SCALE GENOMIC DNA]</scope>
    <source>
        <strain>ymp</strain>
    </source>
</reference>
<feature type="chain" id="PRO_0000350338" description="Probable RNA methyltransferase Pmen_2155">
    <location>
        <begin position="1"/>
        <end position="346"/>
    </location>
</feature>
<feature type="domain" description="Radical SAM core" evidence="3">
    <location>
        <begin position="94"/>
        <end position="320"/>
    </location>
</feature>
<feature type="active site" description="Proton acceptor" evidence="2">
    <location>
        <position position="91"/>
    </location>
</feature>
<feature type="active site" description="S-methylcysteine intermediate" evidence="1">
    <location>
        <position position="325"/>
    </location>
</feature>
<feature type="binding site" evidence="1">
    <location>
        <position position="108"/>
    </location>
    <ligand>
        <name>[4Fe-4S] cluster</name>
        <dbReference type="ChEBI" id="CHEBI:49883"/>
        <note>4Fe-4S-S-AdoMet</note>
    </ligand>
</feature>
<feature type="binding site" evidence="1">
    <location>
        <position position="112"/>
    </location>
    <ligand>
        <name>[4Fe-4S] cluster</name>
        <dbReference type="ChEBI" id="CHEBI:49883"/>
        <note>4Fe-4S-S-AdoMet</note>
    </ligand>
</feature>
<feature type="binding site" evidence="1">
    <location>
        <position position="115"/>
    </location>
    <ligand>
        <name>[4Fe-4S] cluster</name>
        <dbReference type="ChEBI" id="CHEBI:49883"/>
        <note>4Fe-4S-S-AdoMet</note>
    </ligand>
</feature>
<feature type="binding site" evidence="1">
    <location>
        <begin position="153"/>
        <end position="154"/>
    </location>
    <ligand>
        <name>S-adenosyl-L-methionine</name>
        <dbReference type="ChEBI" id="CHEBI:59789"/>
    </ligand>
</feature>
<feature type="binding site" evidence="1">
    <location>
        <position position="183"/>
    </location>
    <ligand>
        <name>S-adenosyl-L-methionine</name>
        <dbReference type="ChEBI" id="CHEBI:59789"/>
    </ligand>
</feature>
<feature type="binding site" evidence="1">
    <location>
        <begin position="206"/>
        <end position="208"/>
    </location>
    <ligand>
        <name>S-adenosyl-L-methionine</name>
        <dbReference type="ChEBI" id="CHEBI:59789"/>
    </ligand>
</feature>
<feature type="binding site" evidence="1">
    <location>
        <position position="282"/>
    </location>
    <ligand>
        <name>S-adenosyl-L-methionine</name>
        <dbReference type="ChEBI" id="CHEBI:59789"/>
    </ligand>
</feature>
<feature type="disulfide bond" description="(transient)" evidence="1">
    <location>
        <begin position="101"/>
        <end position="325"/>
    </location>
</feature>
<name>Y2155_ECTM1</name>
<proteinExistence type="inferred from homology"/>
<protein>
    <recommendedName>
        <fullName>Probable RNA methyltransferase Pmen_2155</fullName>
        <ecNumber>2.1.1.-</ecNumber>
    </recommendedName>
</protein>